<keyword id="KW-0903">Direct protein sequencing</keyword>
<keyword id="KW-1015">Disulfide bond</keyword>
<keyword id="KW-0325">Glycoprotein</keyword>
<keyword id="KW-0339">Growth factor</keyword>
<keyword id="KW-0420">Kringle</keyword>
<keyword id="KW-0873">Pyrrolidone carboxylic acid</keyword>
<keyword id="KW-1185">Reference proteome</keyword>
<keyword id="KW-0677">Repeat</keyword>
<keyword id="KW-0721">Serine protease homolog</keyword>
<keyword id="KW-0732">Signal</keyword>
<reference key="1">
    <citation type="journal article" date="1990" name="Proc. Natl. Acad. Sci. U.S.A.">
        <title>Deduced primary structure of rat hepatocyte growth factor and expression of the mRNA in rat tissues.</title>
        <authorList>
            <person name="Toshiro K."/>
            <person name="Hagiya M."/>
            <person name="Nishizawa T."/>
            <person name="Seki T."/>
            <person name="Shimonishi M."/>
            <person name="Shimizu S."/>
            <person name="Nakamura T."/>
        </authorList>
    </citation>
    <scope>NUCLEOTIDE SEQUENCE [MRNA]</scope>
    <scope>PARTIAL PROTEIN SEQUENCE</scope>
    <source>
        <strain>Wistar</strain>
        <tissue>Liver</tissue>
    </source>
</reference>
<reference key="2">
    <citation type="journal article" date="1990" name="Eur. J. Biochem.">
        <title>Primary structure of rat hepatocyte growth factor and induction of its mRNA during liver regeneration following hepatic injury.</title>
        <authorList>
            <person name="Okajima A."/>
            <person name="Miyazawa K."/>
            <person name="Kitamura N."/>
        </authorList>
    </citation>
    <scope>NUCLEOTIDE SEQUENCE [MRNA]</scope>
    <source>
        <strain>Wistar</strain>
        <tissue>Liver</tissue>
    </source>
</reference>
<accession>P17945</accession>
<organism>
    <name type="scientific">Rattus norvegicus</name>
    <name type="common">Rat</name>
    <dbReference type="NCBI Taxonomy" id="10116"/>
    <lineage>
        <taxon>Eukaryota</taxon>
        <taxon>Metazoa</taxon>
        <taxon>Chordata</taxon>
        <taxon>Craniata</taxon>
        <taxon>Vertebrata</taxon>
        <taxon>Euteleostomi</taxon>
        <taxon>Mammalia</taxon>
        <taxon>Eutheria</taxon>
        <taxon>Euarchontoglires</taxon>
        <taxon>Glires</taxon>
        <taxon>Rodentia</taxon>
        <taxon>Myomorpha</taxon>
        <taxon>Muroidea</taxon>
        <taxon>Muridae</taxon>
        <taxon>Murinae</taxon>
        <taxon>Rattus</taxon>
    </lineage>
</organism>
<name>HGF_RAT</name>
<proteinExistence type="evidence at protein level"/>
<sequence>MMWGTKLLPVLLLQHVLLHLLLLPVTIPYAEGQKKRRNTLHEFKKSAKTTLTKEDPLVKIKTKKVNSADECANRCIRNKGFPFTCKAFVFDKSRKRCYWYPFNSMSSGVKKGFGHEFDLYENKDYIRNCIIGKGGSYKGTVSITKSGIKCQPWNSMIPHEHSFLPSSYRGKDLQENYCRNPRGEEGGPWCFTSNPEVRYEVCDIPQCSEVECMTCNGESYRGPMDHTESGKTCQRWDQQTPHRHKFLPERYPDKGFDDNYCRNPDGKPRPWCYTLDPDTPWEYCAIKMCAHSAVNETDVPMETTECIKGQGEGYRGTTNTIWNGIPCQRWDSQYPHKHDITPENFKCKDLRENYCRNPDGAESPWCFTTDPNIRVGYCSQIPKCDVSSGQDCYRGNGKNYMGNLSKTRSGLTCSMWDKNMEDLHRHIFWEPDASKLTKNYCRNPDDDAHGPWCYTGNPLVPWDYCPISRCEGDTTPTIVNLDHPVISCAKTKQLRVVNGIPTQTTVGWMVSLKYRNKHICGGSLIKESWVLTARQCFPARNKDLKDYEAWLGIHDVHERGEEKRKQILNISQLVYGPEGSDLVLLKLARPAILDNFVSTIDLPSYGCTIPEKTTCSIYGWGYTGLINADGLLRVAHLYIMGNEKCSQHHQGKVTLNESELCAGAEKIGSGPCEGDYGGPLICEQHKMRMVLGVIVPGRGCAIPNRPGIFVRVAYYAKWIHKVILTYKL</sequence>
<gene>
    <name type="primary">Hgf</name>
</gene>
<dbReference type="EMBL" id="D90102">
    <property type="protein sequence ID" value="BAA14133.1"/>
    <property type="molecule type" value="mRNA"/>
</dbReference>
<dbReference type="EMBL" id="X54400">
    <property type="protein sequence ID" value="CAA38266.1"/>
    <property type="molecule type" value="mRNA"/>
</dbReference>
<dbReference type="PIR" id="A35644">
    <property type="entry name" value="A35644"/>
</dbReference>
<dbReference type="RefSeq" id="NP_058713.1">
    <property type="nucleotide sequence ID" value="NM_017017.2"/>
</dbReference>
<dbReference type="SMR" id="P17945"/>
<dbReference type="BioGRID" id="246610">
    <property type="interactions" value="2"/>
</dbReference>
<dbReference type="FunCoup" id="P17945">
    <property type="interactions" value="718"/>
</dbReference>
<dbReference type="MINT" id="P17945"/>
<dbReference type="STRING" id="10116.ENSRNOP00000009764"/>
<dbReference type="MEROPS" id="S01.978"/>
<dbReference type="GlyCosmos" id="P17945">
    <property type="glycosylation" value="4 sites, No reported glycans"/>
</dbReference>
<dbReference type="GlyGen" id="P17945">
    <property type="glycosylation" value="5 sites"/>
</dbReference>
<dbReference type="PhosphoSitePlus" id="P17945"/>
<dbReference type="PaxDb" id="10116-ENSRNOP00000009764"/>
<dbReference type="GeneID" id="24446"/>
<dbReference type="KEGG" id="rno:24446"/>
<dbReference type="AGR" id="RGD:2794"/>
<dbReference type="CTD" id="3082"/>
<dbReference type="RGD" id="2794">
    <property type="gene designation" value="Hgf"/>
</dbReference>
<dbReference type="VEuPathDB" id="HostDB:ENSRNOG00000007027"/>
<dbReference type="eggNOG" id="ENOG502QR40">
    <property type="taxonomic scope" value="Eukaryota"/>
</dbReference>
<dbReference type="HOGENOM" id="CLU_017565_1_0_1"/>
<dbReference type="InParanoid" id="P17945"/>
<dbReference type="PhylomeDB" id="P17945"/>
<dbReference type="TreeFam" id="TF329901"/>
<dbReference type="Reactome" id="R-RNO-114608">
    <property type="pathway name" value="Platelet degranulation"/>
</dbReference>
<dbReference type="Reactome" id="R-RNO-1257604">
    <property type="pathway name" value="PIP3 activates AKT signaling"/>
</dbReference>
<dbReference type="Reactome" id="R-RNO-5673001">
    <property type="pathway name" value="RAF/MAP kinase cascade"/>
</dbReference>
<dbReference type="Reactome" id="R-RNO-6806942">
    <property type="pathway name" value="MET Receptor Activation"/>
</dbReference>
<dbReference type="Reactome" id="R-RNO-6807004">
    <property type="pathway name" value="Negative regulation of MET activity"/>
</dbReference>
<dbReference type="Reactome" id="R-RNO-6811558">
    <property type="pathway name" value="PI5P, PP2A and IER3 Regulate PI3K/AKT Signaling"/>
</dbReference>
<dbReference type="Reactome" id="R-RNO-8851805">
    <property type="pathway name" value="MET activates RAS signaling"/>
</dbReference>
<dbReference type="Reactome" id="R-RNO-8851907">
    <property type="pathway name" value="MET activates PI3K/AKT signaling"/>
</dbReference>
<dbReference type="Reactome" id="R-RNO-8865999">
    <property type="pathway name" value="MET activates PTPN11"/>
</dbReference>
<dbReference type="Reactome" id="R-RNO-8874081">
    <property type="pathway name" value="MET activates PTK2 signaling"/>
</dbReference>
<dbReference type="Reactome" id="R-RNO-8875513">
    <property type="pathway name" value="MET interacts with TNS proteins"/>
</dbReference>
<dbReference type="Reactome" id="R-RNO-8875555">
    <property type="pathway name" value="MET activates RAP1 and RAC1"/>
</dbReference>
<dbReference type="Reactome" id="R-RNO-8875656">
    <property type="pathway name" value="MET receptor recycling"/>
</dbReference>
<dbReference type="Reactome" id="R-RNO-8875791">
    <property type="pathway name" value="MET activates STAT3"/>
</dbReference>
<dbReference type="Reactome" id="R-RNO-9734091">
    <property type="pathway name" value="Drug-mediated inhibition of MET activation"/>
</dbReference>
<dbReference type="PRO" id="PR:P17945"/>
<dbReference type="Proteomes" id="UP000002494">
    <property type="component" value="Chromosome 4"/>
</dbReference>
<dbReference type="Bgee" id="ENSRNOG00000007027">
    <property type="expression patterns" value="Expressed in liver and 16 other cell types or tissues"/>
</dbReference>
<dbReference type="GO" id="GO:0005615">
    <property type="term" value="C:extracellular space"/>
    <property type="evidence" value="ECO:0000314"/>
    <property type="project" value="RGD"/>
</dbReference>
<dbReference type="GO" id="GO:0042056">
    <property type="term" value="F:chemoattractant activity"/>
    <property type="evidence" value="ECO:0000266"/>
    <property type="project" value="RGD"/>
</dbReference>
<dbReference type="GO" id="GO:0008083">
    <property type="term" value="F:growth factor activity"/>
    <property type="evidence" value="ECO:0000315"/>
    <property type="project" value="RGD"/>
</dbReference>
<dbReference type="GO" id="GO:0042802">
    <property type="term" value="F:identical protein binding"/>
    <property type="evidence" value="ECO:0000266"/>
    <property type="project" value="RGD"/>
</dbReference>
<dbReference type="GO" id="GO:0044877">
    <property type="term" value="F:protein-containing complex binding"/>
    <property type="evidence" value="ECO:0000314"/>
    <property type="project" value="RGD"/>
</dbReference>
<dbReference type="GO" id="GO:0005102">
    <property type="term" value="F:signaling receptor binding"/>
    <property type="evidence" value="ECO:0000318"/>
    <property type="project" value="GO_Central"/>
</dbReference>
<dbReference type="GO" id="GO:0060326">
    <property type="term" value="P:cell chemotaxis"/>
    <property type="evidence" value="ECO:0000266"/>
    <property type="project" value="RGD"/>
</dbReference>
<dbReference type="GO" id="GO:0000902">
    <property type="term" value="P:cell morphogenesis"/>
    <property type="evidence" value="ECO:0000266"/>
    <property type="project" value="RGD"/>
</dbReference>
<dbReference type="GO" id="GO:0035729">
    <property type="term" value="P:cellular response to hepatocyte growth factor stimulus"/>
    <property type="evidence" value="ECO:0000266"/>
    <property type="project" value="RGD"/>
</dbReference>
<dbReference type="GO" id="GO:0050673">
    <property type="term" value="P:epithelial cell proliferation"/>
    <property type="evidence" value="ECO:0000266"/>
    <property type="project" value="RGD"/>
</dbReference>
<dbReference type="GO" id="GO:0048012">
    <property type="term" value="P:hepatocyte growth factor receptor signaling pathway"/>
    <property type="evidence" value="ECO:0000266"/>
    <property type="project" value="RGD"/>
</dbReference>
<dbReference type="GO" id="GO:0001889">
    <property type="term" value="P:liver development"/>
    <property type="evidence" value="ECO:0000266"/>
    <property type="project" value="RGD"/>
</dbReference>
<dbReference type="GO" id="GO:0097421">
    <property type="term" value="P:liver regeneration"/>
    <property type="evidence" value="ECO:0000270"/>
    <property type="project" value="RGD"/>
</dbReference>
<dbReference type="GO" id="GO:0051450">
    <property type="term" value="P:myoblast proliferation"/>
    <property type="evidence" value="ECO:0000266"/>
    <property type="project" value="RGD"/>
</dbReference>
<dbReference type="GO" id="GO:0043066">
    <property type="term" value="P:negative regulation of apoptotic process"/>
    <property type="evidence" value="ECO:0000314"/>
    <property type="project" value="RGD"/>
</dbReference>
<dbReference type="GO" id="GO:1902042">
    <property type="term" value="P:negative regulation of extrinsic apoptotic signaling pathway via death domain receptors"/>
    <property type="evidence" value="ECO:0000266"/>
    <property type="project" value="RGD"/>
</dbReference>
<dbReference type="GO" id="GO:1901299">
    <property type="term" value="P:negative regulation of hydrogen peroxide-mediated programmed cell death"/>
    <property type="evidence" value="ECO:0000266"/>
    <property type="project" value="RGD"/>
</dbReference>
<dbReference type="GO" id="GO:0050728">
    <property type="term" value="P:negative regulation of inflammatory response"/>
    <property type="evidence" value="ECO:0000266"/>
    <property type="project" value="RGD"/>
</dbReference>
<dbReference type="GO" id="GO:0032715">
    <property type="term" value="P:negative regulation of interleukin-6 production"/>
    <property type="evidence" value="ECO:0000266"/>
    <property type="project" value="RGD"/>
</dbReference>
<dbReference type="GO" id="GO:0090201">
    <property type="term" value="P:negative regulation of release of cytochrome c from mitochondria"/>
    <property type="evidence" value="ECO:0000266"/>
    <property type="project" value="RGD"/>
</dbReference>
<dbReference type="GO" id="GO:0045766">
    <property type="term" value="P:positive regulation of angiogenesis"/>
    <property type="evidence" value="ECO:0000314"/>
    <property type="project" value="RGD"/>
</dbReference>
<dbReference type="GO" id="GO:0030335">
    <property type="term" value="P:positive regulation of cell migration"/>
    <property type="evidence" value="ECO:0000266"/>
    <property type="project" value="RGD"/>
</dbReference>
<dbReference type="GO" id="GO:0008284">
    <property type="term" value="P:positive regulation of cell population proliferation"/>
    <property type="evidence" value="ECO:0000304"/>
    <property type="project" value="RGD"/>
</dbReference>
<dbReference type="GO" id="GO:2000573">
    <property type="term" value="P:positive regulation of DNA biosynthetic process"/>
    <property type="evidence" value="ECO:0000266"/>
    <property type="project" value="RGD"/>
</dbReference>
<dbReference type="GO" id="GO:0032733">
    <property type="term" value="P:positive regulation of interleukin-10 production"/>
    <property type="evidence" value="ECO:0000266"/>
    <property type="project" value="RGD"/>
</dbReference>
<dbReference type="GO" id="GO:0043410">
    <property type="term" value="P:positive regulation of MAPK cascade"/>
    <property type="evidence" value="ECO:0000266"/>
    <property type="project" value="RGD"/>
</dbReference>
<dbReference type="GO" id="GO:0031643">
    <property type="term" value="P:positive regulation of myelination"/>
    <property type="evidence" value="ECO:0000314"/>
    <property type="project" value="RGD"/>
</dbReference>
<dbReference type="GO" id="GO:0070572">
    <property type="term" value="P:positive regulation of neuron projection regeneration"/>
    <property type="evidence" value="ECO:0000314"/>
    <property type="project" value="RGD"/>
</dbReference>
<dbReference type="GO" id="GO:0051897">
    <property type="term" value="P:positive regulation of phosphatidylinositol 3-kinase/protein kinase B signal transduction"/>
    <property type="evidence" value="ECO:0000266"/>
    <property type="project" value="RGD"/>
</dbReference>
<dbReference type="GO" id="GO:0006508">
    <property type="term" value="P:proteolysis"/>
    <property type="evidence" value="ECO:0007669"/>
    <property type="project" value="InterPro"/>
</dbReference>
<dbReference type="GO" id="GO:0060665">
    <property type="term" value="P:regulation of branching involved in salivary gland morphogenesis by mesenchymal-epithelial signaling"/>
    <property type="evidence" value="ECO:0000266"/>
    <property type="project" value="RGD"/>
</dbReference>
<dbReference type="GO" id="GO:1900744">
    <property type="term" value="P:regulation of p38MAPK cascade"/>
    <property type="evidence" value="ECO:0000266"/>
    <property type="project" value="RGD"/>
</dbReference>
<dbReference type="GO" id="GO:0014856">
    <property type="term" value="P:skeletal muscle cell proliferation"/>
    <property type="evidence" value="ECO:0000266"/>
    <property type="project" value="RGD"/>
</dbReference>
<dbReference type="CDD" id="cd00108">
    <property type="entry name" value="KR"/>
    <property type="match status" value="4"/>
</dbReference>
<dbReference type="CDD" id="cd00129">
    <property type="entry name" value="PAN_APPLE"/>
    <property type="match status" value="1"/>
</dbReference>
<dbReference type="CDD" id="cd00190">
    <property type="entry name" value="Tryp_SPc"/>
    <property type="match status" value="1"/>
</dbReference>
<dbReference type="FunFam" id="2.40.10.10:FF:000023">
    <property type="entry name" value="Hepatocyte growth factor"/>
    <property type="match status" value="1"/>
</dbReference>
<dbReference type="FunFam" id="2.40.10.10:FF:000026">
    <property type="entry name" value="Hepatocyte growth factor"/>
    <property type="match status" value="1"/>
</dbReference>
<dbReference type="FunFam" id="2.40.20.10:FF:000004">
    <property type="entry name" value="Hepatocyte growth factor"/>
    <property type="match status" value="1"/>
</dbReference>
<dbReference type="FunFam" id="2.40.20.10:FF:000007">
    <property type="entry name" value="Hepatocyte growth factor"/>
    <property type="match status" value="1"/>
</dbReference>
<dbReference type="FunFam" id="2.40.20.10:FF:000008">
    <property type="entry name" value="Hepatocyte growth factor"/>
    <property type="match status" value="1"/>
</dbReference>
<dbReference type="FunFam" id="2.40.20.10:FF:000047">
    <property type="entry name" value="Hepatocyte growth factor"/>
    <property type="match status" value="1"/>
</dbReference>
<dbReference type="FunFam" id="3.50.4.10:FF:000003">
    <property type="entry name" value="Hepatocyte growth factor"/>
    <property type="match status" value="1"/>
</dbReference>
<dbReference type="Gene3D" id="3.50.4.10">
    <property type="entry name" value="Hepatocyte Growth Factor"/>
    <property type="match status" value="2"/>
</dbReference>
<dbReference type="Gene3D" id="2.40.20.10">
    <property type="entry name" value="Plasminogen Kringle 4"/>
    <property type="match status" value="4"/>
</dbReference>
<dbReference type="Gene3D" id="2.40.10.10">
    <property type="entry name" value="Trypsin-like serine proteases"/>
    <property type="match status" value="2"/>
</dbReference>
<dbReference type="InterPro" id="IPR027284">
    <property type="entry name" value="Hepatocyte_GF"/>
</dbReference>
<dbReference type="InterPro" id="IPR024174">
    <property type="entry name" value="HGF/MST1"/>
</dbReference>
<dbReference type="InterPro" id="IPR000001">
    <property type="entry name" value="Kringle"/>
</dbReference>
<dbReference type="InterPro" id="IPR013806">
    <property type="entry name" value="Kringle-like"/>
</dbReference>
<dbReference type="InterPro" id="IPR018056">
    <property type="entry name" value="Kringle_CS"/>
</dbReference>
<dbReference type="InterPro" id="IPR038178">
    <property type="entry name" value="Kringle_sf"/>
</dbReference>
<dbReference type="InterPro" id="IPR003609">
    <property type="entry name" value="Pan_app"/>
</dbReference>
<dbReference type="InterPro" id="IPR009003">
    <property type="entry name" value="Peptidase_S1_PA"/>
</dbReference>
<dbReference type="InterPro" id="IPR043504">
    <property type="entry name" value="Peptidase_S1_PA_chymotrypsin"/>
</dbReference>
<dbReference type="InterPro" id="IPR001314">
    <property type="entry name" value="Peptidase_S1A"/>
</dbReference>
<dbReference type="InterPro" id="IPR050759">
    <property type="entry name" value="Serine_protease_kringle"/>
</dbReference>
<dbReference type="InterPro" id="IPR001254">
    <property type="entry name" value="Trypsin_dom"/>
</dbReference>
<dbReference type="PANTHER" id="PTHR24261:SF8">
    <property type="entry name" value="HEPATOCYTE GROWTH FACTOR"/>
    <property type="match status" value="1"/>
</dbReference>
<dbReference type="PANTHER" id="PTHR24261">
    <property type="entry name" value="PLASMINOGEN-RELATED"/>
    <property type="match status" value="1"/>
</dbReference>
<dbReference type="Pfam" id="PF00051">
    <property type="entry name" value="Kringle"/>
    <property type="match status" value="4"/>
</dbReference>
<dbReference type="Pfam" id="PF00024">
    <property type="entry name" value="PAN_1"/>
    <property type="match status" value="1"/>
</dbReference>
<dbReference type="Pfam" id="PF00089">
    <property type="entry name" value="Trypsin"/>
    <property type="match status" value="1"/>
</dbReference>
<dbReference type="PIRSF" id="PIRSF500183">
    <property type="entry name" value="Hepatocyte_GF"/>
    <property type="match status" value="1"/>
</dbReference>
<dbReference type="PIRSF" id="PIRSF001152">
    <property type="entry name" value="HGF_MST1"/>
    <property type="match status" value="1"/>
</dbReference>
<dbReference type="PRINTS" id="PR00722">
    <property type="entry name" value="CHYMOTRYPSIN"/>
</dbReference>
<dbReference type="PRINTS" id="PR00018">
    <property type="entry name" value="KRINGLE"/>
</dbReference>
<dbReference type="SMART" id="SM00130">
    <property type="entry name" value="KR"/>
    <property type="match status" value="4"/>
</dbReference>
<dbReference type="SMART" id="SM00473">
    <property type="entry name" value="PAN_AP"/>
    <property type="match status" value="1"/>
</dbReference>
<dbReference type="SMART" id="SM00020">
    <property type="entry name" value="Tryp_SPc"/>
    <property type="match status" value="1"/>
</dbReference>
<dbReference type="SUPFAM" id="SSF57414">
    <property type="entry name" value="Hairpin loop containing domain-like"/>
    <property type="match status" value="1"/>
</dbReference>
<dbReference type="SUPFAM" id="SSF57440">
    <property type="entry name" value="Kringle-like"/>
    <property type="match status" value="4"/>
</dbReference>
<dbReference type="SUPFAM" id="SSF50494">
    <property type="entry name" value="Trypsin-like serine proteases"/>
    <property type="match status" value="1"/>
</dbReference>
<dbReference type="PROSITE" id="PS00021">
    <property type="entry name" value="KRINGLE_1"/>
    <property type="match status" value="4"/>
</dbReference>
<dbReference type="PROSITE" id="PS50070">
    <property type="entry name" value="KRINGLE_2"/>
    <property type="match status" value="4"/>
</dbReference>
<dbReference type="PROSITE" id="PS50948">
    <property type="entry name" value="PAN"/>
    <property type="match status" value="1"/>
</dbReference>
<dbReference type="PROSITE" id="PS50240">
    <property type="entry name" value="TRYPSIN_DOM"/>
    <property type="match status" value="1"/>
</dbReference>
<evidence type="ECO:0000250" key="1"/>
<evidence type="ECO:0000250" key="2">
    <source>
        <dbReference type="UniProtKB" id="P14210"/>
    </source>
</evidence>
<evidence type="ECO:0000255" key="3"/>
<evidence type="ECO:0000255" key="4">
    <source>
        <dbReference type="PROSITE-ProRule" id="PRU00121"/>
    </source>
</evidence>
<evidence type="ECO:0000255" key="5">
    <source>
        <dbReference type="PROSITE-ProRule" id="PRU00274"/>
    </source>
</evidence>
<evidence type="ECO:0000255" key="6">
    <source>
        <dbReference type="PROSITE-ProRule" id="PRU00315"/>
    </source>
</evidence>
<evidence type="ECO:0000305" key="7"/>
<protein>
    <recommendedName>
        <fullName>Hepatocyte growth factor</fullName>
    </recommendedName>
    <alternativeName>
        <fullName>Hepatopoietin-A</fullName>
    </alternativeName>
    <alternativeName>
        <fullName>Scatter factor</fullName>
        <shortName>SF</shortName>
    </alternativeName>
    <component>
        <recommendedName>
            <fullName>Hepatocyte growth factor alpha chain</fullName>
        </recommendedName>
    </component>
    <component>
        <recommendedName>
            <fullName>Hepatocyte growth factor beta chain</fullName>
        </recommendedName>
    </component>
</protein>
<comment type="function">
    <text evidence="2">Potent mitogen for mature parenchymal hepatocyte cells, seems to be a hepatotrophic factor, and acts as a growth factor for a broad spectrum of tissues and cell types (By similarity). Activating ligand for the receptor tyrosine kinase MET by binding to it and promoting its dimerization (By similarity). Activates MAPK signaling following TMPRSS13 cleavage and activation (By similarity).</text>
</comment>
<comment type="subunit">
    <text>Dimer of an alpha chain and a beta chain linked by a disulfide bond. Interacts with SRPX2; the interaction increases HGF mitogenic activity.</text>
</comment>
<comment type="PTM">
    <text evidence="2">The single-chain precursor undergoes proteolytic processing by TMPRSS13 resulting in an active two-chain form. The single-chain precursor undergoes proteolytic processing by HGFAC resulting in an active two-chain form.</text>
</comment>
<comment type="similarity">
    <text evidence="5">Belongs to the peptidase S1 family. Plasminogen subfamily.</text>
</comment>
<comment type="caution">
    <text evidence="7">Has lost two of the three essential catalytic residues and so probably has no enzymatic activity.</text>
</comment>
<feature type="signal peptide" evidence="1">
    <location>
        <begin position="1"/>
        <end position="32"/>
    </location>
</feature>
<feature type="chain" id="PRO_0000028095" description="Hepatocyte growth factor alpha chain">
    <location>
        <begin position="33"/>
        <end position="495"/>
    </location>
</feature>
<feature type="chain" id="PRO_0000028096" description="Hepatocyte growth factor beta chain">
    <location>
        <begin position="496"/>
        <end position="728"/>
    </location>
</feature>
<feature type="domain" description="PAN" evidence="6">
    <location>
        <begin position="38"/>
        <end position="124"/>
    </location>
</feature>
<feature type="domain" description="Kringle 1" evidence="4">
    <location>
        <begin position="129"/>
        <end position="207"/>
    </location>
</feature>
<feature type="domain" description="Kringle 2" evidence="4">
    <location>
        <begin position="212"/>
        <end position="289"/>
    </location>
</feature>
<feature type="domain" description="Kringle 3" evidence="4">
    <location>
        <begin position="306"/>
        <end position="384"/>
    </location>
</feature>
<feature type="domain" description="Kringle 4" evidence="4">
    <location>
        <begin position="392"/>
        <end position="470"/>
    </location>
</feature>
<feature type="domain" description="Peptidase S1" evidence="5">
    <location>
        <begin position="496"/>
        <end position="724"/>
    </location>
</feature>
<feature type="modified residue" description="Pyrrolidone carboxylic acid" evidence="2">
    <location>
        <position position="33"/>
    </location>
</feature>
<feature type="glycosylation site" description="N-linked (GlcNAc...) asparagine" evidence="3">
    <location>
        <position position="295"/>
    </location>
</feature>
<feature type="glycosylation site" description="N-linked (GlcNAc...) asparagine" evidence="3">
    <location>
        <position position="403"/>
    </location>
</feature>
<feature type="glycosylation site" description="N-linked (GlcNAc...) asparagine" evidence="3">
    <location>
        <position position="569"/>
    </location>
</feature>
<feature type="glycosylation site" description="N-linked (GlcNAc...) asparagine" evidence="3">
    <location>
        <position position="656"/>
    </location>
</feature>
<feature type="disulfide bond" evidence="1">
    <location>
        <begin position="71"/>
        <end position="97"/>
    </location>
</feature>
<feature type="disulfide bond" evidence="1">
    <location>
        <begin position="75"/>
        <end position="85"/>
    </location>
</feature>
<feature type="disulfide bond" evidence="1">
    <location>
        <begin position="129"/>
        <end position="207"/>
    </location>
</feature>
<feature type="disulfide bond" evidence="1">
    <location>
        <begin position="150"/>
        <end position="190"/>
    </location>
</feature>
<feature type="disulfide bond" evidence="1">
    <location>
        <begin position="178"/>
        <end position="202"/>
    </location>
</feature>
<feature type="disulfide bond" evidence="1">
    <location>
        <begin position="212"/>
        <end position="289"/>
    </location>
</feature>
<feature type="disulfide bond" evidence="1">
    <location>
        <begin position="233"/>
        <end position="272"/>
    </location>
</feature>
<feature type="disulfide bond" evidence="1">
    <location>
        <begin position="261"/>
        <end position="284"/>
    </location>
</feature>
<feature type="disulfide bond" evidence="1">
    <location>
        <begin position="306"/>
        <end position="384"/>
    </location>
</feature>
<feature type="disulfide bond" evidence="1">
    <location>
        <begin position="327"/>
        <end position="366"/>
    </location>
</feature>
<feature type="disulfide bond" evidence="1">
    <location>
        <begin position="355"/>
        <end position="378"/>
    </location>
</feature>
<feature type="disulfide bond" evidence="1">
    <location>
        <begin position="392"/>
        <end position="470"/>
    </location>
</feature>
<feature type="disulfide bond" evidence="1">
    <location>
        <begin position="413"/>
        <end position="453"/>
    </location>
</feature>
<feature type="disulfide bond" evidence="1">
    <location>
        <begin position="441"/>
        <end position="465"/>
    </location>
</feature>
<feature type="disulfide bond" description="Interchain (between alpha and beta chains)" evidence="4 5 6">
    <location>
        <begin position="488"/>
        <end position="607"/>
    </location>
</feature>
<feature type="disulfide bond" evidence="1">
    <location>
        <begin position="520"/>
        <end position="536"/>
    </location>
</feature>
<feature type="disulfide bond" evidence="1">
    <location>
        <begin position="615"/>
        <end position="682"/>
    </location>
</feature>
<feature type="disulfide bond" evidence="1">
    <location>
        <begin position="645"/>
        <end position="661"/>
    </location>
</feature>
<feature type="disulfide bond" evidence="1">
    <location>
        <begin position="672"/>
        <end position="700"/>
    </location>
</feature>